<proteinExistence type="evidence at transcript level"/>
<protein>
    <recommendedName>
        <fullName>Probable histone H2A.1</fullName>
    </recommendedName>
</protein>
<organism>
    <name type="scientific">Oryza sativa subsp. japonica</name>
    <name type="common">Rice</name>
    <dbReference type="NCBI Taxonomy" id="39947"/>
    <lineage>
        <taxon>Eukaryota</taxon>
        <taxon>Viridiplantae</taxon>
        <taxon>Streptophyta</taxon>
        <taxon>Embryophyta</taxon>
        <taxon>Tracheophyta</taxon>
        <taxon>Spermatophyta</taxon>
        <taxon>Magnoliopsida</taxon>
        <taxon>Liliopsida</taxon>
        <taxon>Poales</taxon>
        <taxon>Poaceae</taxon>
        <taxon>BOP clade</taxon>
        <taxon>Oryzoideae</taxon>
        <taxon>Oryzeae</taxon>
        <taxon>Oryzinae</taxon>
        <taxon>Oryza</taxon>
        <taxon>Oryza sativa</taxon>
    </lineage>
</organism>
<evidence type="ECO:0000250" key="1"/>
<evidence type="ECO:0000305" key="2"/>
<feature type="chain" id="PRO_0000055258" description="Probable histone H2A.1">
    <location>
        <begin position="1"/>
        <end position="135"/>
    </location>
</feature>
<reference key="1">
    <citation type="journal article" date="2005" name="Nature">
        <title>The map-based sequence of the rice genome.</title>
        <authorList>
            <consortium name="International rice genome sequencing project (IRGSP)"/>
        </authorList>
    </citation>
    <scope>NUCLEOTIDE SEQUENCE [LARGE SCALE GENOMIC DNA]</scope>
    <source>
        <strain>cv. Nipponbare</strain>
    </source>
</reference>
<reference key="2">
    <citation type="journal article" date="2008" name="Nucleic Acids Res.">
        <title>The rice annotation project database (RAP-DB): 2008 update.</title>
        <authorList>
            <consortium name="The rice annotation project (RAP)"/>
        </authorList>
    </citation>
    <scope>GENOME REANNOTATION</scope>
    <source>
        <strain>cv. Nipponbare</strain>
    </source>
</reference>
<reference key="3">
    <citation type="journal article" date="2013" name="Rice">
        <title>Improvement of the Oryza sativa Nipponbare reference genome using next generation sequence and optical map data.</title>
        <authorList>
            <person name="Kawahara Y."/>
            <person name="de la Bastide M."/>
            <person name="Hamilton J.P."/>
            <person name="Kanamori H."/>
            <person name="McCombie W.R."/>
            <person name="Ouyang S."/>
            <person name="Schwartz D.C."/>
            <person name="Tanaka T."/>
            <person name="Wu J."/>
            <person name="Zhou S."/>
            <person name="Childs K.L."/>
            <person name="Davidson R.M."/>
            <person name="Lin H."/>
            <person name="Quesada-Ocampo L."/>
            <person name="Vaillancourt B."/>
            <person name="Sakai H."/>
            <person name="Lee S.S."/>
            <person name="Kim J."/>
            <person name="Numa H."/>
            <person name="Itoh T."/>
            <person name="Buell C.R."/>
            <person name="Matsumoto T."/>
        </authorList>
    </citation>
    <scope>GENOME REANNOTATION</scope>
    <source>
        <strain>cv. Nipponbare</strain>
    </source>
</reference>
<reference key="4">
    <citation type="journal article" date="2005" name="PLoS Biol.">
        <title>The genomes of Oryza sativa: a history of duplications.</title>
        <authorList>
            <person name="Yu J."/>
            <person name="Wang J."/>
            <person name="Lin W."/>
            <person name="Li S."/>
            <person name="Li H."/>
            <person name="Zhou J."/>
            <person name="Ni P."/>
            <person name="Dong W."/>
            <person name="Hu S."/>
            <person name="Zeng C."/>
            <person name="Zhang J."/>
            <person name="Zhang Y."/>
            <person name="Li R."/>
            <person name="Xu Z."/>
            <person name="Li S."/>
            <person name="Li X."/>
            <person name="Zheng H."/>
            <person name="Cong L."/>
            <person name="Lin L."/>
            <person name="Yin J."/>
            <person name="Geng J."/>
            <person name="Li G."/>
            <person name="Shi J."/>
            <person name="Liu J."/>
            <person name="Lv H."/>
            <person name="Li J."/>
            <person name="Wang J."/>
            <person name="Deng Y."/>
            <person name="Ran L."/>
            <person name="Shi X."/>
            <person name="Wang X."/>
            <person name="Wu Q."/>
            <person name="Li C."/>
            <person name="Ren X."/>
            <person name="Wang J."/>
            <person name="Wang X."/>
            <person name="Li D."/>
            <person name="Liu D."/>
            <person name="Zhang X."/>
            <person name="Ji Z."/>
            <person name="Zhao W."/>
            <person name="Sun Y."/>
            <person name="Zhang Z."/>
            <person name="Bao J."/>
            <person name="Han Y."/>
            <person name="Dong L."/>
            <person name="Ji J."/>
            <person name="Chen P."/>
            <person name="Wu S."/>
            <person name="Liu J."/>
            <person name="Xiao Y."/>
            <person name="Bu D."/>
            <person name="Tan J."/>
            <person name="Yang L."/>
            <person name="Ye C."/>
            <person name="Zhang J."/>
            <person name="Xu J."/>
            <person name="Zhou Y."/>
            <person name="Yu Y."/>
            <person name="Zhang B."/>
            <person name="Zhuang S."/>
            <person name="Wei H."/>
            <person name="Liu B."/>
            <person name="Lei M."/>
            <person name="Yu H."/>
            <person name="Li Y."/>
            <person name="Xu H."/>
            <person name="Wei S."/>
            <person name="He X."/>
            <person name="Fang L."/>
            <person name="Zhang Z."/>
            <person name="Zhang Y."/>
            <person name="Huang X."/>
            <person name="Su Z."/>
            <person name="Tong W."/>
            <person name="Li J."/>
            <person name="Tong Z."/>
            <person name="Li S."/>
            <person name="Ye J."/>
            <person name="Wang L."/>
            <person name="Fang L."/>
            <person name="Lei T."/>
            <person name="Chen C.-S."/>
            <person name="Chen H.-C."/>
            <person name="Xu Z."/>
            <person name="Li H."/>
            <person name="Huang H."/>
            <person name="Zhang F."/>
            <person name="Xu H."/>
            <person name="Li N."/>
            <person name="Zhao C."/>
            <person name="Li S."/>
            <person name="Dong L."/>
            <person name="Huang Y."/>
            <person name="Li L."/>
            <person name="Xi Y."/>
            <person name="Qi Q."/>
            <person name="Li W."/>
            <person name="Zhang B."/>
            <person name="Hu W."/>
            <person name="Zhang Y."/>
            <person name="Tian X."/>
            <person name="Jiao Y."/>
            <person name="Liang X."/>
            <person name="Jin J."/>
            <person name="Gao L."/>
            <person name="Zheng W."/>
            <person name="Hao B."/>
            <person name="Liu S.-M."/>
            <person name="Wang W."/>
            <person name="Yuan L."/>
            <person name="Cao M."/>
            <person name="McDermott J."/>
            <person name="Samudrala R."/>
            <person name="Wang J."/>
            <person name="Wong G.K.-S."/>
            <person name="Yang H."/>
        </authorList>
    </citation>
    <scope>NUCLEOTIDE SEQUENCE [LARGE SCALE GENOMIC DNA]</scope>
    <source>
        <strain>cv. Nipponbare</strain>
    </source>
</reference>
<reference key="5">
    <citation type="journal article" date="2003" name="Science">
        <title>Collection, mapping, and annotation of over 28,000 cDNA clones from japonica rice.</title>
        <authorList>
            <consortium name="The rice full-length cDNA consortium"/>
        </authorList>
    </citation>
    <scope>NUCLEOTIDE SEQUENCE [LARGE SCALE MRNA]</scope>
    <source>
        <strain>cv. Nipponbare</strain>
    </source>
</reference>
<accession>Q6ZL43</accession>
<accession>B7EPP1</accession>
<accession>Q0D5P5</accession>
<comment type="function">
    <text>Core component of nucleosome. Nucleosomes wrap and compact DNA into chromatin, limiting DNA accessibility to the cellular machineries which require DNA as a template. Histones thereby play a central role in transcription regulation, DNA repair, DNA replication and chromosomal stability. DNA accessibility is regulated via a complex set of post-translational modifications of histones, also called histone code, and nucleosome remodeling.</text>
</comment>
<comment type="subunit">
    <text>The nucleosome is a histone octamer containing two molecules each of H2A, H2B, H3 and H4 assembled in one H3-H4 heterotetramer and two H2A-H2B heterodimers. The octamer wraps approximately 147 bp of DNA.</text>
</comment>
<comment type="subcellular location">
    <subcellularLocation>
        <location evidence="1">Nucleus</location>
    </subcellularLocation>
    <subcellularLocation>
        <location evidence="1">Chromosome</location>
    </subcellularLocation>
</comment>
<comment type="similarity">
    <text evidence="2">Belongs to the histone H2A family.</text>
</comment>
<keyword id="KW-0158">Chromosome</keyword>
<keyword id="KW-0238">DNA-binding</keyword>
<keyword id="KW-0544">Nucleosome core</keyword>
<keyword id="KW-0539">Nucleus</keyword>
<keyword id="KW-1185">Reference proteome</keyword>
<dbReference type="EMBL" id="AP003838">
    <property type="protein sequence ID" value="BAC83133.1"/>
    <property type="molecule type" value="Genomic_DNA"/>
</dbReference>
<dbReference type="EMBL" id="AP008213">
    <property type="protein sequence ID" value="BAF21828.1"/>
    <property type="molecule type" value="Genomic_DNA"/>
</dbReference>
<dbReference type="EMBL" id="AP014963">
    <property type="protein sequence ID" value="BAT01999.1"/>
    <property type="molecule type" value="Genomic_DNA"/>
</dbReference>
<dbReference type="EMBL" id="CM000144">
    <property type="protein sequence ID" value="EAZ40190.1"/>
    <property type="molecule type" value="Genomic_DNA"/>
</dbReference>
<dbReference type="EMBL" id="AK099888">
    <property type="protein sequence ID" value="BAG94338.1"/>
    <property type="molecule type" value="mRNA"/>
</dbReference>
<dbReference type="RefSeq" id="XP_015646583.1">
    <property type="nucleotide sequence ID" value="XM_015791097.1"/>
</dbReference>
<dbReference type="SMR" id="Q6ZL43"/>
<dbReference type="FunCoup" id="Q6ZL43">
    <property type="interactions" value="1566"/>
</dbReference>
<dbReference type="STRING" id="39947.Q6ZL43"/>
<dbReference type="PaxDb" id="39947-Q6ZL43"/>
<dbReference type="EnsemblPlants" id="Os07t0545300-01">
    <property type="protein sequence ID" value="Os07t0545300-01"/>
    <property type="gene ID" value="Os07g0545300"/>
</dbReference>
<dbReference type="Gramene" id="Os07t0545300-01">
    <property type="protein sequence ID" value="Os07t0545300-01"/>
    <property type="gene ID" value="Os07g0545300"/>
</dbReference>
<dbReference type="KEGG" id="dosa:Os07g0545300"/>
<dbReference type="eggNOG" id="KOG1756">
    <property type="taxonomic scope" value="Eukaryota"/>
</dbReference>
<dbReference type="HOGENOM" id="CLU_062828_3_0_1"/>
<dbReference type="InParanoid" id="Q6ZL43"/>
<dbReference type="OMA" id="ATHSHEK"/>
<dbReference type="OrthoDB" id="9421954at2759"/>
<dbReference type="Proteomes" id="UP000000763">
    <property type="component" value="Chromosome 7"/>
</dbReference>
<dbReference type="Proteomes" id="UP000007752">
    <property type="component" value="Chromosome 7"/>
</dbReference>
<dbReference type="Proteomes" id="UP000059680">
    <property type="component" value="Chromosome 7"/>
</dbReference>
<dbReference type="GO" id="GO:0000786">
    <property type="term" value="C:nucleosome"/>
    <property type="evidence" value="ECO:0000318"/>
    <property type="project" value="GO_Central"/>
</dbReference>
<dbReference type="GO" id="GO:0005634">
    <property type="term" value="C:nucleus"/>
    <property type="evidence" value="ECO:0000318"/>
    <property type="project" value="GO_Central"/>
</dbReference>
<dbReference type="GO" id="GO:0003677">
    <property type="term" value="F:DNA binding"/>
    <property type="evidence" value="ECO:0007669"/>
    <property type="project" value="UniProtKB-KW"/>
</dbReference>
<dbReference type="GO" id="GO:0046982">
    <property type="term" value="F:protein heterodimerization activity"/>
    <property type="evidence" value="ECO:0007669"/>
    <property type="project" value="InterPro"/>
</dbReference>
<dbReference type="GO" id="GO:0030527">
    <property type="term" value="F:structural constituent of chromatin"/>
    <property type="evidence" value="ECO:0000318"/>
    <property type="project" value="GO_Central"/>
</dbReference>
<dbReference type="GO" id="GO:0031507">
    <property type="term" value="P:heterochromatin formation"/>
    <property type="evidence" value="ECO:0000318"/>
    <property type="project" value="GO_Central"/>
</dbReference>
<dbReference type="CDD" id="cd00074">
    <property type="entry name" value="HFD_H2A"/>
    <property type="match status" value="1"/>
</dbReference>
<dbReference type="FunFam" id="1.10.20.10:FF:000009">
    <property type="entry name" value="Histone H2A"/>
    <property type="match status" value="1"/>
</dbReference>
<dbReference type="Gene3D" id="1.10.20.10">
    <property type="entry name" value="Histone, subunit A"/>
    <property type="match status" value="1"/>
</dbReference>
<dbReference type="InterPro" id="IPR009072">
    <property type="entry name" value="Histone-fold"/>
</dbReference>
<dbReference type="InterPro" id="IPR002119">
    <property type="entry name" value="Histone_H2A"/>
</dbReference>
<dbReference type="InterPro" id="IPR007125">
    <property type="entry name" value="Histone_H2A/H2B/H3"/>
</dbReference>
<dbReference type="InterPro" id="IPR032454">
    <property type="entry name" value="Histone_H2A_C"/>
</dbReference>
<dbReference type="InterPro" id="IPR032458">
    <property type="entry name" value="Histone_H2A_CS"/>
</dbReference>
<dbReference type="PANTHER" id="PTHR23430">
    <property type="entry name" value="HISTONE H2A"/>
    <property type="match status" value="1"/>
</dbReference>
<dbReference type="Pfam" id="PF00125">
    <property type="entry name" value="Histone"/>
    <property type="match status" value="1"/>
</dbReference>
<dbReference type="Pfam" id="PF16211">
    <property type="entry name" value="Histone_H2A_C"/>
    <property type="match status" value="1"/>
</dbReference>
<dbReference type="PRINTS" id="PR00620">
    <property type="entry name" value="HISTONEH2A"/>
</dbReference>
<dbReference type="SMART" id="SM00414">
    <property type="entry name" value="H2A"/>
    <property type="match status" value="1"/>
</dbReference>
<dbReference type="SUPFAM" id="SSF47113">
    <property type="entry name" value="Histone-fold"/>
    <property type="match status" value="1"/>
</dbReference>
<dbReference type="PROSITE" id="PS00046">
    <property type="entry name" value="HISTONE_H2A"/>
    <property type="match status" value="1"/>
</dbReference>
<name>H2A1_ORYSJ</name>
<gene>
    <name type="ordered locus">Os07g0545300</name>
    <name type="ordered locus">LOC_Os07g36130</name>
    <name type="ORF">OJ1582_D10.25</name>
    <name type="ORF">OsJ_023673</name>
</gene>
<sequence length="135" mass="14044">MAGRGKAIGAGAAKKATSRSSKAGLQFPVGRIARFLKAGKYAERVGAGAPVYLAAVLEYLAAEVLELAGNAARDNKKTRIVPRHIQLAVRNDEELTKLLGGATIASGGVMPNIHQHLLPKKAGSSKASTVDDDDN</sequence>